<name>AT2A1_HUMAN</name>
<proteinExistence type="evidence at protein level"/>
<dbReference type="EC" id="7.2.2.10" evidence="1"/>
<dbReference type="EMBL" id="U96781">
    <property type="protein sequence ID" value="AAB53113.1"/>
    <property type="molecule type" value="Genomic_DNA"/>
</dbReference>
<dbReference type="EMBL" id="U96773">
    <property type="protein sequence ID" value="AAB53113.1"/>
    <property type="status" value="JOINED"/>
    <property type="molecule type" value="Genomic_DNA"/>
</dbReference>
<dbReference type="EMBL" id="U96774">
    <property type="protein sequence ID" value="AAB53113.1"/>
    <property type="status" value="JOINED"/>
    <property type="molecule type" value="Genomic_DNA"/>
</dbReference>
<dbReference type="EMBL" id="U96775">
    <property type="protein sequence ID" value="AAB53113.1"/>
    <property type="status" value="JOINED"/>
    <property type="molecule type" value="Genomic_DNA"/>
</dbReference>
<dbReference type="EMBL" id="U96776">
    <property type="protein sequence ID" value="AAB53113.1"/>
    <property type="status" value="JOINED"/>
    <property type="molecule type" value="Genomic_DNA"/>
</dbReference>
<dbReference type="EMBL" id="U96777">
    <property type="protein sequence ID" value="AAB53113.1"/>
    <property type="status" value="JOINED"/>
    <property type="molecule type" value="Genomic_DNA"/>
</dbReference>
<dbReference type="EMBL" id="U96778">
    <property type="protein sequence ID" value="AAB53113.1"/>
    <property type="status" value="JOINED"/>
    <property type="molecule type" value="Genomic_DNA"/>
</dbReference>
<dbReference type="EMBL" id="U96779">
    <property type="protein sequence ID" value="AAB53113.1"/>
    <property type="status" value="JOINED"/>
    <property type="molecule type" value="Genomic_DNA"/>
</dbReference>
<dbReference type="EMBL" id="U96780">
    <property type="protein sequence ID" value="AAB53113.1"/>
    <property type="status" value="JOINED"/>
    <property type="molecule type" value="Genomic_DNA"/>
</dbReference>
<dbReference type="EMBL" id="U96781">
    <property type="protein sequence ID" value="AAB53112.1"/>
    <property type="molecule type" value="Genomic_DNA"/>
</dbReference>
<dbReference type="EMBL" id="U96773">
    <property type="protein sequence ID" value="AAB53112.1"/>
    <property type="status" value="JOINED"/>
    <property type="molecule type" value="Genomic_DNA"/>
</dbReference>
<dbReference type="EMBL" id="U96774">
    <property type="protein sequence ID" value="AAB53112.1"/>
    <property type="status" value="JOINED"/>
    <property type="molecule type" value="Genomic_DNA"/>
</dbReference>
<dbReference type="EMBL" id="U96775">
    <property type="protein sequence ID" value="AAB53112.1"/>
    <property type="status" value="JOINED"/>
    <property type="molecule type" value="Genomic_DNA"/>
</dbReference>
<dbReference type="EMBL" id="U96776">
    <property type="protein sequence ID" value="AAB53112.1"/>
    <property type="status" value="JOINED"/>
    <property type="molecule type" value="Genomic_DNA"/>
</dbReference>
<dbReference type="EMBL" id="U96777">
    <property type="protein sequence ID" value="AAB53112.1"/>
    <property type="status" value="JOINED"/>
    <property type="molecule type" value="Genomic_DNA"/>
</dbReference>
<dbReference type="EMBL" id="U96778">
    <property type="protein sequence ID" value="AAB53112.1"/>
    <property type="status" value="JOINED"/>
    <property type="molecule type" value="Genomic_DNA"/>
</dbReference>
<dbReference type="EMBL" id="U96779">
    <property type="protein sequence ID" value="AAB53112.1"/>
    <property type="status" value="JOINED"/>
    <property type="molecule type" value="Genomic_DNA"/>
</dbReference>
<dbReference type="EMBL" id="U96780">
    <property type="protein sequence ID" value="AAB53112.1"/>
    <property type="status" value="JOINED"/>
    <property type="molecule type" value="Genomic_DNA"/>
</dbReference>
<dbReference type="EMBL" id="AK128456">
    <property type="protein sequence ID" value="BAG54679.1"/>
    <property type="molecule type" value="mRNA"/>
</dbReference>
<dbReference type="EMBL" id="AK291314">
    <property type="protein sequence ID" value="BAF84003.1"/>
    <property type="molecule type" value="mRNA"/>
</dbReference>
<dbReference type="EMBL" id="AC109460">
    <property type="status" value="NOT_ANNOTATED_CDS"/>
    <property type="molecule type" value="Genomic_DNA"/>
</dbReference>
<dbReference type="EMBL" id="AC133550">
    <property type="status" value="NOT_ANNOTATED_CDS"/>
    <property type="molecule type" value="Genomic_DNA"/>
</dbReference>
<dbReference type="CCDS" id="CCDS10643.1">
    <molecule id="O14983-1"/>
</dbReference>
<dbReference type="CCDS" id="CCDS42139.1">
    <molecule id="O14983-2"/>
</dbReference>
<dbReference type="CCDS" id="CCDS66997.1">
    <molecule id="O14983-3"/>
</dbReference>
<dbReference type="RefSeq" id="NP_001273004.1">
    <molecule id="O14983-3"/>
    <property type="nucleotide sequence ID" value="NM_001286075.2"/>
</dbReference>
<dbReference type="RefSeq" id="NP_004311.1">
    <molecule id="O14983-2"/>
    <property type="nucleotide sequence ID" value="NM_004320.6"/>
</dbReference>
<dbReference type="RefSeq" id="NP_775293.1">
    <molecule id="O14983-1"/>
    <property type="nucleotide sequence ID" value="NM_173201.5"/>
</dbReference>
<dbReference type="SMR" id="O14983"/>
<dbReference type="BioGRID" id="106977">
    <property type="interactions" value="509"/>
</dbReference>
<dbReference type="CORUM" id="O14983"/>
<dbReference type="FunCoup" id="O14983">
    <property type="interactions" value="1565"/>
</dbReference>
<dbReference type="IntAct" id="O14983">
    <property type="interactions" value="115"/>
</dbReference>
<dbReference type="MINT" id="O14983"/>
<dbReference type="STRING" id="9606.ENSP00000349595"/>
<dbReference type="BindingDB" id="O14983"/>
<dbReference type="ChEMBL" id="CHEMBL3136"/>
<dbReference type="DrugBank" id="DB07604">
    <property type="generic name" value="(6AR,11AS,11BR)-10-ACETYL-9-HYDROXY-7,7-DIMETHYL-2,6,6A,7,11A,11B-HEXAHYDRO-11H-PYRROLO[1',2':2,3]ISOINDOLO[4,5,6-CD]INDOL-11-ONE"/>
</dbReference>
<dbReference type="DrugBank" id="DB04638">
    <property type="generic name" value="2,5-di-tert-butylhydroquinone"/>
</dbReference>
<dbReference type="DrugBank" id="DB03909">
    <property type="generic name" value="Adenosine-5'-[Beta, Gamma-Methylene]Triphosphate"/>
</dbReference>
<dbReference type="DrugBank" id="DB01189">
    <property type="generic name" value="Desflurane"/>
</dbReference>
<dbReference type="DrugBank" id="DB00228">
    <property type="generic name" value="Enflurane"/>
</dbReference>
<dbReference type="DrugBank" id="DB00867">
    <property type="generic name" value="Ritodrine"/>
</dbReference>
<dbReference type="DrugBank" id="DB01236">
    <property type="generic name" value="Sevoflurane"/>
</dbReference>
<dbReference type="DrugBank" id="DB04444">
    <property type="generic name" value="Tetrafluoroaluminate Ion"/>
</dbReference>
<dbReference type="GuidetoPHARMACOLOGY" id="840"/>
<dbReference type="GlyGen" id="O14983">
    <property type="glycosylation" value="1 site, 1 O-linked glycan (1 site)"/>
</dbReference>
<dbReference type="iPTMnet" id="O14983"/>
<dbReference type="MetOSite" id="O14983"/>
<dbReference type="PhosphoSitePlus" id="O14983"/>
<dbReference type="SwissPalm" id="O14983"/>
<dbReference type="BioMuta" id="ATP2A1"/>
<dbReference type="jPOST" id="O14983"/>
<dbReference type="MassIVE" id="O14983"/>
<dbReference type="PaxDb" id="9606-ENSP00000349595"/>
<dbReference type="PeptideAtlas" id="O14983"/>
<dbReference type="ProteomicsDB" id="3827"/>
<dbReference type="ProteomicsDB" id="48358">
    <molecule id="O14983-1"/>
</dbReference>
<dbReference type="ProteomicsDB" id="48359">
    <molecule id="O14983-2"/>
</dbReference>
<dbReference type="Antibodypedia" id="26608">
    <property type="antibodies" value="379 antibodies from 37 providers"/>
</dbReference>
<dbReference type="DNASU" id="487"/>
<dbReference type="Ensembl" id="ENST00000357084.7">
    <molecule id="O14983-1"/>
    <property type="protein sequence ID" value="ENSP00000349595.3"/>
    <property type="gene ID" value="ENSG00000196296.14"/>
</dbReference>
<dbReference type="Ensembl" id="ENST00000395503.9">
    <molecule id="O14983-2"/>
    <property type="protein sequence ID" value="ENSP00000378879.5"/>
    <property type="gene ID" value="ENSG00000196296.14"/>
</dbReference>
<dbReference type="Ensembl" id="ENST00000536376.5">
    <molecule id="O14983-3"/>
    <property type="protein sequence ID" value="ENSP00000443101.1"/>
    <property type="gene ID" value="ENSG00000196296.14"/>
</dbReference>
<dbReference type="GeneID" id="487"/>
<dbReference type="KEGG" id="hsa:487"/>
<dbReference type="MANE-Select" id="ENST00000395503.9">
    <molecule id="O14983-2"/>
    <property type="protein sequence ID" value="ENSP00000378879.5"/>
    <property type="RefSeq nucleotide sequence ID" value="NM_004320.6"/>
    <property type="RefSeq protein sequence ID" value="NP_004311.1"/>
</dbReference>
<dbReference type="UCSC" id="uc002drn.1">
    <molecule id="O14983-1"/>
    <property type="organism name" value="human"/>
</dbReference>
<dbReference type="AGR" id="HGNC:811"/>
<dbReference type="CTD" id="487"/>
<dbReference type="DisGeNET" id="487"/>
<dbReference type="GeneCards" id="ATP2A1"/>
<dbReference type="HGNC" id="HGNC:811">
    <property type="gene designation" value="ATP2A1"/>
</dbReference>
<dbReference type="HPA" id="ENSG00000196296">
    <property type="expression patterns" value="Group enriched (skeletal muscle, tongue)"/>
</dbReference>
<dbReference type="MalaCards" id="ATP2A1"/>
<dbReference type="MIM" id="108730">
    <property type="type" value="gene"/>
</dbReference>
<dbReference type="MIM" id="601003">
    <property type="type" value="phenotype"/>
</dbReference>
<dbReference type="neXtProt" id="NX_O14983"/>
<dbReference type="OpenTargets" id="ENSG00000196296"/>
<dbReference type="Orphanet" id="53347">
    <property type="disease" value="Brody myopathy"/>
</dbReference>
<dbReference type="PharmGKB" id="PA25105"/>
<dbReference type="VEuPathDB" id="HostDB:ENSG00000196296"/>
<dbReference type="eggNOG" id="KOG0202">
    <property type="taxonomic scope" value="Eukaryota"/>
</dbReference>
<dbReference type="GeneTree" id="ENSGT00940000159895"/>
<dbReference type="HOGENOM" id="CLU_002360_3_2_1"/>
<dbReference type="InParanoid" id="O14983"/>
<dbReference type="OMA" id="PVCSIVF"/>
<dbReference type="OrthoDB" id="3352408at2759"/>
<dbReference type="PAN-GO" id="O14983">
    <property type="GO annotations" value="4 GO annotations based on evolutionary models"/>
</dbReference>
<dbReference type="PhylomeDB" id="O14983"/>
<dbReference type="TreeFam" id="TF300651"/>
<dbReference type="PathwayCommons" id="O14983"/>
<dbReference type="Reactome" id="R-HSA-1912420">
    <property type="pathway name" value="Pre-NOTCH Processing in Golgi"/>
</dbReference>
<dbReference type="Reactome" id="R-HSA-418359">
    <property type="pathway name" value="Reduction of cytosolic Ca++ levels"/>
</dbReference>
<dbReference type="Reactome" id="R-HSA-5578775">
    <property type="pathway name" value="Ion homeostasis"/>
</dbReference>
<dbReference type="Reactome" id="R-HSA-936837">
    <property type="pathway name" value="Ion transport by P-type ATPases"/>
</dbReference>
<dbReference type="SignaLink" id="O14983"/>
<dbReference type="SIGNOR" id="O14983"/>
<dbReference type="BioGRID-ORCS" id="487">
    <property type="hits" value="12 hits in 1160 CRISPR screens"/>
</dbReference>
<dbReference type="ChiTaRS" id="ATP2A1">
    <property type="organism name" value="human"/>
</dbReference>
<dbReference type="GeneWiki" id="ATP2A1"/>
<dbReference type="GenomeRNAi" id="487"/>
<dbReference type="Pharos" id="O14983">
    <property type="development level" value="Tchem"/>
</dbReference>
<dbReference type="PRO" id="PR:O14983"/>
<dbReference type="Proteomes" id="UP000005640">
    <property type="component" value="Chromosome 16"/>
</dbReference>
<dbReference type="RNAct" id="O14983">
    <property type="molecule type" value="protein"/>
</dbReference>
<dbReference type="Bgee" id="ENSG00000196296">
    <property type="expression patterns" value="Expressed in hindlimb stylopod muscle and 114 other cell types or tissues"/>
</dbReference>
<dbReference type="ExpressionAtlas" id="O14983">
    <property type="expression patterns" value="baseline and differential"/>
</dbReference>
<dbReference type="GO" id="GO:0034704">
    <property type="term" value="C:calcium channel complex"/>
    <property type="evidence" value="ECO:0000305"/>
    <property type="project" value="BHF-UCL"/>
</dbReference>
<dbReference type="GO" id="GO:0005789">
    <property type="term" value="C:endoplasmic reticulum membrane"/>
    <property type="evidence" value="ECO:0000314"/>
    <property type="project" value="UniProtKB"/>
</dbReference>
<dbReference type="GO" id="GO:0005793">
    <property type="term" value="C:endoplasmic reticulum-Golgi intermediate compartment"/>
    <property type="evidence" value="ECO:0000250"/>
    <property type="project" value="UniProtKB"/>
</dbReference>
<dbReference type="GO" id="GO:0031673">
    <property type="term" value="C:H zone"/>
    <property type="evidence" value="ECO:0000314"/>
    <property type="project" value="UniProtKB"/>
</dbReference>
<dbReference type="GO" id="GO:0031674">
    <property type="term" value="C:I band"/>
    <property type="evidence" value="ECO:0000314"/>
    <property type="project" value="UniProtKB"/>
</dbReference>
<dbReference type="GO" id="GO:0016020">
    <property type="term" value="C:membrane"/>
    <property type="evidence" value="ECO:0000250"/>
    <property type="project" value="UniProtKB"/>
</dbReference>
<dbReference type="GO" id="GO:0005739">
    <property type="term" value="C:mitochondrion"/>
    <property type="evidence" value="ECO:0007669"/>
    <property type="project" value="GOC"/>
</dbReference>
<dbReference type="GO" id="GO:0048471">
    <property type="term" value="C:perinuclear region of cytoplasm"/>
    <property type="evidence" value="ECO:0000250"/>
    <property type="project" value="UniProtKB"/>
</dbReference>
<dbReference type="GO" id="GO:0031095">
    <property type="term" value="C:platelet dense tubular network membrane"/>
    <property type="evidence" value="ECO:0000304"/>
    <property type="project" value="Reactome"/>
</dbReference>
<dbReference type="GO" id="GO:0016529">
    <property type="term" value="C:sarcoplasmic reticulum"/>
    <property type="evidence" value="ECO:0000250"/>
    <property type="project" value="UniProtKB"/>
</dbReference>
<dbReference type="GO" id="GO:0033017">
    <property type="term" value="C:sarcoplasmic reticulum membrane"/>
    <property type="evidence" value="ECO:0000250"/>
    <property type="project" value="UniProtKB"/>
</dbReference>
<dbReference type="GO" id="GO:0005524">
    <property type="term" value="F:ATP binding"/>
    <property type="evidence" value="ECO:0000250"/>
    <property type="project" value="UniProtKB"/>
</dbReference>
<dbReference type="GO" id="GO:0016887">
    <property type="term" value="F:ATP hydrolysis activity"/>
    <property type="evidence" value="ECO:0007669"/>
    <property type="project" value="InterPro"/>
</dbReference>
<dbReference type="GO" id="GO:0005509">
    <property type="term" value="F:calcium ion binding"/>
    <property type="evidence" value="ECO:0000315"/>
    <property type="project" value="UniProtKB"/>
</dbReference>
<dbReference type="GO" id="GO:0030899">
    <property type="term" value="F:calcium-dependent ATPase activity"/>
    <property type="evidence" value="ECO:0000250"/>
    <property type="project" value="ARUK-UCL"/>
</dbReference>
<dbReference type="GO" id="GO:0005388">
    <property type="term" value="F:P-type calcium transporter activity"/>
    <property type="evidence" value="ECO:0000314"/>
    <property type="project" value="UniProtKB"/>
</dbReference>
<dbReference type="GO" id="GO:0042803">
    <property type="term" value="F:protein homodimerization activity"/>
    <property type="evidence" value="ECO:0000353"/>
    <property type="project" value="BHF-UCL"/>
</dbReference>
<dbReference type="GO" id="GO:0008637">
    <property type="term" value="P:apoptotic mitochondrial changes"/>
    <property type="evidence" value="ECO:0000315"/>
    <property type="project" value="BHF-UCL"/>
</dbReference>
<dbReference type="GO" id="GO:0070509">
    <property type="term" value="P:calcium ion import"/>
    <property type="evidence" value="ECO:0000315"/>
    <property type="project" value="BHF-UCL"/>
</dbReference>
<dbReference type="GO" id="GO:1990036">
    <property type="term" value="P:calcium ion import into sarcoplasmic reticulum"/>
    <property type="evidence" value="ECO:0000250"/>
    <property type="project" value="UniProtKB"/>
</dbReference>
<dbReference type="GO" id="GO:0070588">
    <property type="term" value="P:calcium ion transmembrane transport"/>
    <property type="evidence" value="ECO:0000318"/>
    <property type="project" value="GO_Central"/>
</dbReference>
<dbReference type="GO" id="GO:0006816">
    <property type="term" value="P:calcium ion transport"/>
    <property type="evidence" value="ECO:0000314"/>
    <property type="project" value="UniProtKB"/>
</dbReference>
<dbReference type="GO" id="GO:0006874">
    <property type="term" value="P:intracellular calcium ion homeostasis"/>
    <property type="evidence" value="ECO:0000318"/>
    <property type="project" value="GO_Central"/>
</dbReference>
<dbReference type="GO" id="GO:0070059">
    <property type="term" value="P:intrinsic apoptotic signaling pathway in response to endoplasmic reticulum stress"/>
    <property type="evidence" value="ECO:0000315"/>
    <property type="project" value="BHF-UCL"/>
</dbReference>
<dbReference type="GO" id="GO:0051659">
    <property type="term" value="P:maintenance of mitochondrion location"/>
    <property type="evidence" value="ECO:0000315"/>
    <property type="project" value="BHF-UCL"/>
</dbReference>
<dbReference type="GO" id="GO:0034220">
    <property type="term" value="P:monoatomic ion transmembrane transport"/>
    <property type="evidence" value="ECO:0000304"/>
    <property type="project" value="Reactome"/>
</dbReference>
<dbReference type="GO" id="GO:0032471">
    <property type="term" value="P:negative regulation of endoplasmic reticulum calcium ion concentration"/>
    <property type="evidence" value="ECO:0000315"/>
    <property type="project" value="BHF-UCL"/>
</dbReference>
<dbReference type="GO" id="GO:0045988">
    <property type="term" value="P:negative regulation of striated muscle contraction"/>
    <property type="evidence" value="ECO:0000315"/>
    <property type="project" value="UniProtKB"/>
</dbReference>
<dbReference type="GO" id="GO:1901896">
    <property type="term" value="P:positive regulation of ATPase-coupled calcium transmembrane transporter activity"/>
    <property type="evidence" value="ECO:0000250"/>
    <property type="project" value="UniProtKB"/>
</dbReference>
<dbReference type="GO" id="GO:1902082">
    <property type="term" value="P:positive regulation of calcium ion import into sarcoplasmic reticulum"/>
    <property type="evidence" value="ECO:0000250"/>
    <property type="project" value="UniProtKB"/>
</dbReference>
<dbReference type="GO" id="GO:0106134">
    <property type="term" value="P:positive regulation of cardiac muscle cell contraction"/>
    <property type="evidence" value="ECO:0000250"/>
    <property type="project" value="UniProtKB"/>
</dbReference>
<dbReference type="GO" id="GO:0032470">
    <property type="term" value="P:positive regulation of endoplasmic reticulum calcium ion concentration"/>
    <property type="evidence" value="ECO:0000315"/>
    <property type="project" value="BHF-UCL"/>
</dbReference>
<dbReference type="GO" id="GO:0031448">
    <property type="term" value="P:positive regulation of fast-twitch skeletal muscle fiber contraction"/>
    <property type="evidence" value="ECO:0000314"/>
    <property type="project" value="UniProtKB"/>
</dbReference>
<dbReference type="GO" id="GO:0051561">
    <property type="term" value="P:positive regulation of mitochondrial calcium ion concentration"/>
    <property type="evidence" value="ECO:0000315"/>
    <property type="project" value="BHF-UCL"/>
</dbReference>
<dbReference type="GO" id="GO:1903779">
    <property type="term" value="P:regulation of cardiac conduction"/>
    <property type="evidence" value="ECO:0000304"/>
    <property type="project" value="Reactome"/>
</dbReference>
<dbReference type="GO" id="GO:0006942">
    <property type="term" value="P:regulation of striated muscle contraction"/>
    <property type="evidence" value="ECO:0000315"/>
    <property type="project" value="UniProtKB"/>
</dbReference>
<dbReference type="GO" id="GO:0090076">
    <property type="term" value="P:relaxation of skeletal muscle"/>
    <property type="evidence" value="ECO:0000314"/>
    <property type="project" value="BHF-UCL"/>
</dbReference>
<dbReference type="GO" id="GO:0034976">
    <property type="term" value="P:response to endoplasmic reticulum stress"/>
    <property type="evidence" value="ECO:0000315"/>
    <property type="project" value="BHF-UCL"/>
</dbReference>
<dbReference type="CDD" id="cd02083">
    <property type="entry name" value="P-type_ATPase_SERCA"/>
    <property type="match status" value="1"/>
</dbReference>
<dbReference type="FunFam" id="3.40.1110.10:FF:000003">
    <property type="entry name" value="Calcium-transporting ATPase"/>
    <property type="match status" value="1"/>
</dbReference>
<dbReference type="FunFam" id="3.40.50.1000:FF:000005">
    <property type="entry name" value="Calcium-transporting ATPase 1"/>
    <property type="match status" value="1"/>
</dbReference>
<dbReference type="FunFam" id="1.20.1110.10:FF:000065">
    <property type="entry name" value="Sarcoplasmic/endoplasmic reticulum calcium ATPase 1"/>
    <property type="match status" value="3"/>
</dbReference>
<dbReference type="FunFam" id="2.70.150.10:FF:000160">
    <property type="entry name" value="Sarcoplasmic/endoplasmic reticulum calcium ATPase 1"/>
    <property type="match status" value="2"/>
</dbReference>
<dbReference type="Gene3D" id="3.40.1110.10">
    <property type="entry name" value="Calcium-transporting ATPase, cytoplasmic domain N"/>
    <property type="match status" value="1"/>
</dbReference>
<dbReference type="Gene3D" id="2.70.150.10">
    <property type="entry name" value="Calcium-transporting ATPase, cytoplasmic transduction domain A"/>
    <property type="match status" value="1"/>
</dbReference>
<dbReference type="Gene3D" id="1.20.1110.10">
    <property type="entry name" value="Calcium-transporting ATPase, transmembrane domain"/>
    <property type="match status" value="1"/>
</dbReference>
<dbReference type="Gene3D" id="3.40.50.1000">
    <property type="entry name" value="HAD superfamily/HAD-like"/>
    <property type="match status" value="1"/>
</dbReference>
<dbReference type="InterPro" id="IPR006068">
    <property type="entry name" value="ATPase_P-typ_cation-transptr_C"/>
</dbReference>
<dbReference type="InterPro" id="IPR004014">
    <property type="entry name" value="ATPase_P-typ_cation-transptr_N"/>
</dbReference>
<dbReference type="InterPro" id="IPR023299">
    <property type="entry name" value="ATPase_P-typ_cyto_dom_N"/>
</dbReference>
<dbReference type="InterPro" id="IPR018303">
    <property type="entry name" value="ATPase_P-typ_P_site"/>
</dbReference>
<dbReference type="InterPro" id="IPR023298">
    <property type="entry name" value="ATPase_P-typ_TM_dom_sf"/>
</dbReference>
<dbReference type="InterPro" id="IPR008250">
    <property type="entry name" value="ATPase_P-typ_transduc_dom_A_sf"/>
</dbReference>
<dbReference type="InterPro" id="IPR036412">
    <property type="entry name" value="HAD-like_sf"/>
</dbReference>
<dbReference type="InterPro" id="IPR023214">
    <property type="entry name" value="HAD_sf"/>
</dbReference>
<dbReference type="InterPro" id="IPR005782">
    <property type="entry name" value="P-type_ATPase_IIA"/>
</dbReference>
<dbReference type="InterPro" id="IPR001757">
    <property type="entry name" value="P_typ_ATPase"/>
</dbReference>
<dbReference type="InterPro" id="IPR044492">
    <property type="entry name" value="P_typ_ATPase_HD_dom"/>
</dbReference>
<dbReference type="NCBIfam" id="TIGR01116">
    <property type="entry name" value="ATPase-IIA1_Ca"/>
    <property type="match status" value="1"/>
</dbReference>
<dbReference type="NCBIfam" id="TIGR01494">
    <property type="entry name" value="ATPase_P-type"/>
    <property type="match status" value="2"/>
</dbReference>
<dbReference type="PANTHER" id="PTHR42861">
    <property type="entry name" value="CALCIUM-TRANSPORTING ATPASE"/>
    <property type="match status" value="1"/>
</dbReference>
<dbReference type="Pfam" id="PF13246">
    <property type="entry name" value="Cation_ATPase"/>
    <property type="match status" value="1"/>
</dbReference>
<dbReference type="Pfam" id="PF00689">
    <property type="entry name" value="Cation_ATPase_C"/>
    <property type="match status" value="1"/>
</dbReference>
<dbReference type="Pfam" id="PF00690">
    <property type="entry name" value="Cation_ATPase_N"/>
    <property type="match status" value="1"/>
</dbReference>
<dbReference type="Pfam" id="PF00122">
    <property type="entry name" value="E1-E2_ATPase"/>
    <property type="match status" value="1"/>
</dbReference>
<dbReference type="Pfam" id="PF00702">
    <property type="entry name" value="Hydrolase"/>
    <property type="match status" value="1"/>
</dbReference>
<dbReference type="PRINTS" id="PR00119">
    <property type="entry name" value="CATATPASE"/>
</dbReference>
<dbReference type="PRINTS" id="PR00120">
    <property type="entry name" value="HATPASE"/>
</dbReference>
<dbReference type="SFLD" id="SFLDS00003">
    <property type="entry name" value="Haloacid_Dehalogenase"/>
    <property type="match status" value="1"/>
</dbReference>
<dbReference type="SFLD" id="SFLDF00027">
    <property type="entry name" value="p-type_atpase"/>
    <property type="match status" value="1"/>
</dbReference>
<dbReference type="SMART" id="SM00831">
    <property type="entry name" value="Cation_ATPase_N"/>
    <property type="match status" value="1"/>
</dbReference>
<dbReference type="SUPFAM" id="SSF81653">
    <property type="entry name" value="Calcium ATPase, transduction domain A"/>
    <property type="match status" value="1"/>
</dbReference>
<dbReference type="SUPFAM" id="SSF81665">
    <property type="entry name" value="Calcium ATPase, transmembrane domain M"/>
    <property type="match status" value="1"/>
</dbReference>
<dbReference type="SUPFAM" id="SSF56784">
    <property type="entry name" value="HAD-like"/>
    <property type="match status" value="1"/>
</dbReference>
<dbReference type="SUPFAM" id="SSF81660">
    <property type="entry name" value="Metal cation-transporting ATPase, ATP-binding domain N"/>
    <property type="match status" value="1"/>
</dbReference>
<dbReference type="PROSITE" id="PS00154">
    <property type="entry name" value="ATPASE_E1_E2"/>
    <property type="match status" value="1"/>
</dbReference>
<sequence>MEAAHAKTTEECLAYFGVSETTGLTPDQVKRNLEKYGLNELPAEEGKTLWELVIEQFEDLLVRILLLAACISFVLAWFEEGEETITAFVEPFVILLILIANAIVGVWQERNAENAIEALKEYEPEMGKVYRADRKSVQRIKARDIVPGDIVEVAVGDKVPADIRILAIKSTTLRVDQSILTGESVSVIKHTEPVPDPRAVNQDKKNMLFSGTNIAAGKALGIVATTGVGTEIGKIRDQMAATEQDKTPLQQKLDEFGEQLSKVISLICVAVWLINIGHFNDPVHGGSWFRGAIYYFKIAVALAVAAIPEGLPAVITTCLALGTRRMAKKNAIVRSLPSVETLGCTSVICSDKTGTLTTNQMSVCKMFIIDKVDGDICLLNEFSITGSTYAPEGEVLKNDKPVRPGQYDGLVELATICALCNDSSLDFNEAKGVYEKVGEATETALTTLVEKMNVFNTDVRSLSKVERANACNSVIRQLMKKEFTLEFSRDRKSMSVYCSPAKSSRAAVGNKMFVKGAPEGVIDRCNYVRVGTTRVPLTGPVKEKIMAVIKEWGTGRDTLRCLALATRDTPPKREEMVLDDSARFLEYETDLTFVGVVGMLDPPRKEVTGSIQLCRDAGIRVIMITGDNKGTAIAICRRIGIFGENEEVADRAYTGREFDDLPLAEQREACRRACCFARVEPSHKSKIVEYLQSYDEITAMTGDGVNDAPALKKAEIGIAMGSGTAVAKTASEMVLADDNFSTIVAAVEEGRAIYNNMKQFIRYLISSNVGEVVCIFLTAALGLPEALIPVQLLWVNLVTDGLPATALGFNPPDLDIMDRPPRSPKEPLISGWLFFRYMAIGGYVGAATVGAAAWWFLYAEDGPHVNYSQLTHFMQCTEDNTHFEGIDCEVFEAPEPMTMALSVLVTIEMCNALNSLSENQSLLRMPPWVNIWLLGSICLSMSLHFLILYVDPLPMIFKLRALDLTQWLMVLKISLPVIGLDEILKFVARNYLEDPEDERRK</sequence>
<comment type="function">
    <text evidence="1 4">Key regulator of striated muscle performance by acting as the major Ca(2+) ATPase responsible for the reuptake of cytosolic Ca(2+) into the sarcoplasmic reticulum. Catalyzes the hydrolysis of ATP coupled with the translocation of calcium from the cytosol to the sarcoplasmic reticulum lumen (By similarity). Contributes to calcium sequestration involved in muscular excitation/contraction (PubMed:10914677).</text>
</comment>
<comment type="catalytic activity">
    <reaction evidence="1">
        <text>Ca(2+)(in) + ATP + H2O = Ca(2+)(out) + ADP + phosphate + H(+)</text>
        <dbReference type="Rhea" id="RHEA:18105"/>
        <dbReference type="ChEBI" id="CHEBI:15377"/>
        <dbReference type="ChEBI" id="CHEBI:15378"/>
        <dbReference type="ChEBI" id="CHEBI:29108"/>
        <dbReference type="ChEBI" id="CHEBI:30616"/>
        <dbReference type="ChEBI" id="CHEBI:43474"/>
        <dbReference type="ChEBI" id="CHEBI:456216"/>
        <dbReference type="EC" id="7.2.2.10"/>
    </reaction>
    <physiologicalReaction direction="left-to-right" evidence="1">
        <dbReference type="Rhea" id="RHEA:18106"/>
    </physiologicalReaction>
</comment>
<comment type="cofactor">
    <cofactor evidence="1">
        <name>Mg(2+)</name>
        <dbReference type="ChEBI" id="CHEBI:18420"/>
    </cofactor>
</comment>
<comment type="activity regulation">
    <text evidence="1 3">Inhibited by sarcolipin (SLN) and myoregulin (MRLN). Has also been shown to be reversibly inhibited by phospholamban (PLN) at low calcium concentrations in vitro. Dephosphorylated PLN decreases the apparent affinity of the ATPase for calcium and this inhibition is regulated by the phosphorylation of PLN in vitro. Enhanced by DWORF; DWORF increases activity by displacing sarcolipin (SLN), phospholamban (PLN) and myoregulin (MRLN).</text>
</comment>
<comment type="subunit">
    <text evidence="3 5">Interacts with sarcolipin (SLN) (By similarity). Interacts with phospholamban (PLN) (By similarity). Interacts with myoregulin (MRLN). Interacts with DWORF (By similarity). Interacts with VMP1 (PubMed:28890335).</text>
</comment>
<comment type="subcellular location">
    <subcellularLocation>
        <location evidence="1">Endoplasmic reticulum membrane</location>
        <topology evidence="1">Multi-pass membrane protein</topology>
    </subcellularLocation>
    <subcellularLocation>
        <location evidence="1">Sarcoplasmic reticulum membrane</location>
        <topology evidence="1">Multi-pass membrane protein</topology>
    </subcellularLocation>
</comment>
<comment type="alternative products">
    <event type="alternative splicing"/>
    <isoform>
        <id>O14983-1</id>
        <name>SERCA1B</name>
        <name>ATP2A1B</name>
        <name>Neonatal</name>
        <sequence type="displayed"/>
    </isoform>
    <isoform>
        <id>O14983-2</id>
        <name>SERCA1A</name>
        <name>ATP2A1A</name>
        <name>Adult</name>
        <sequence type="described" ref="VSP_000355"/>
    </isoform>
    <isoform>
        <id>O14983-3</id>
        <name>3</name>
        <sequence type="described" ref="VSP_054770 VSP_000355"/>
    </isoform>
</comment>
<comment type="tissue specificity">
    <text evidence="6">Skeletal muscle, fast twitch muscle (type II) fibers.</text>
</comment>
<comment type="developmental stage">
    <text evidence="6">Isoform SERCA1A accounts for more than 99% of SERCA1 isoforms expressed in adult skeletal muscle, while isoform SERCA1B predominates in neo-natal skeletal muscle.</text>
</comment>
<comment type="induction">
    <text evidence="6">Increased contractile activity leads to a decrease in SERCA1 expression, while decreased contractile activity leads to an increase in SERCA1 expression.</text>
</comment>
<comment type="domain">
    <text evidence="1">Ca(2+) and ATP binding cause major rearrangements of the cytoplasmic and transmembrane domains. According to the E1-E2 model, Ca(2+) binding to the cytosolic domain of the pump in the high-affinity E1 conformation is followed by the ATP-dependent phosphorylation of the active site Asp, giving rise to E1P. A conformational change of the phosphoenzyme gives rise to the low-affinity E2P state that exposes the Ca(2+) ions to the lumenal side and promotes Ca(2+) release. Dephosphorylation of the active site Asp mediates the subsequent return to the E1 conformation.</text>
</comment>
<comment type="domain">
    <text evidence="1">PLN and SLN both have a single transmembrane helix; both occupy a similar binding site on ATP2A1 that is situated between the ATP2A1 transmembrane helices.</text>
</comment>
<comment type="disease" evidence="4">
    <disease id="DI-00200">
        <name>Brody disease</name>
        <acronym>BROD</acronym>
        <description>An autosomal recessive muscular disorder characterized by exercise-induced muscle stiffness and cramps primarily affecting the arms, legs, and eyelids, although more generalized muscle involvement may also occur.</description>
        <dbReference type="MIM" id="601003"/>
    </disease>
    <text>The disease is caused by variants affecting the gene represented in this entry.</text>
</comment>
<comment type="similarity">
    <text evidence="9">Belongs to the cation transport ATPase (P-type) (TC 3.A.3) family. Type IIA subfamily.</text>
</comment>
<organism>
    <name type="scientific">Homo sapiens</name>
    <name type="common">Human</name>
    <dbReference type="NCBI Taxonomy" id="9606"/>
    <lineage>
        <taxon>Eukaryota</taxon>
        <taxon>Metazoa</taxon>
        <taxon>Chordata</taxon>
        <taxon>Craniata</taxon>
        <taxon>Vertebrata</taxon>
        <taxon>Euteleostomi</taxon>
        <taxon>Mammalia</taxon>
        <taxon>Eutheria</taxon>
        <taxon>Euarchontoglires</taxon>
        <taxon>Primates</taxon>
        <taxon>Haplorrhini</taxon>
        <taxon>Catarrhini</taxon>
        <taxon>Hominidae</taxon>
        <taxon>Homo</taxon>
    </lineage>
</organism>
<keyword id="KW-0025">Alternative splicing</keyword>
<keyword id="KW-0067">ATP-binding</keyword>
<keyword id="KW-0106">Calcium</keyword>
<keyword id="KW-0109">Calcium transport</keyword>
<keyword id="KW-0225">Disease variant</keyword>
<keyword id="KW-1015">Disulfide bond</keyword>
<keyword id="KW-0256">Endoplasmic reticulum</keyword>
<keyword id="KW-0406">Ion transport</keyword>
<keyword id="KW-0460">Magnesium</keyword>
<keyword id="KW-0472">Membrane</keyword>
<keyword id="KW-0479">Metal-binding</keyword>
<keyword id="KW-0547">Nucleotide-binding</keyword>
<keyword id="KW-0597">Phosphoprotein</keyword>
<keyword id="KW-1267">Proteomics identification</keyword>
<keyword id="KW-1185">Reference proteome</keyword>
<keyword id="KW-0703">Sarcoplasmic reticulum</keyword>
<keyword id="KW-1278">Translocase</keyword>
<keyword id="KW-0812">Transmembrane</keyword>
<keyword id="KW-1133">Transmembrane helix</keyword>
<keyword id="KW-0813">Transport</keyword>
<feature type="chain" id="PRO_0000046187" description="Sarcoplasmic/endoplasmic reticulum calcium ATPase 1">
    <location>
        <begin position="1"/>
        <end position="1001"/>
    </location>
</feature>
<feature type="transmembrane region" description="Helical; Name=1" evidence="1">
    <location>
        <begin position="49"/>
        <end position="69"/>
    </location>
</feature>
<feature type="transmembrane region" description="Helical; Name=2" evidence="1">
    <location>
        <begin position="90"/>
        <end position="110"/>
    </location>
</feature>
<feature type="transmembrane region" description="Helical; Name=3" evidence="1">
    <location>
        <begin position="254"/>
        <end position="273"/>
    </location>
</feature>
<feature type="transmembrane region" description="Helical; Name=4" evidence="1">
    <location>
        <begin position="296"/>
        <end position="313"/>
    </location>
</feature>
<feature type="transmembrane region" description="Helical; Name=5" evidence="1">
    <location>
        <begin position="758"/>
        <end position="777"/>
    </location>
</feature>
<feature type="transmembrane region" description="Helical; Name=6" evidence="1">
    <location>
        <begin position="788"/>
        <end position="808"/>
    </location>
</feature>
<feature type="transmembrane region" description="Helical; Name=7" evidence="1">
    <location>
        <begin position="829"/>
        <end position="851"/>
    </location>
</feature>
<feature type="transmembrane region" description="Helical; Name=8" evidence="1">
    <location>
        <begin position="898"/>
        <end position="917"/>
    </location>
</feature>
<feature type="transmembrane region" description="Helical; Name=9" evidence="1">
    <location>
        <begin position="931"/>
        <end position="949"/>
    </location>
</feature>
<feature type="transmembrane region" description="Helical; Name=10" evidence="1">
    <location>
        <begin position="965"/>
        <end position="985"/>
    </location>
</feature>
<feature type="region of interest" description="Interaction with PLN" evidence="1">
    <location>
        <begin position="788"/>
        <end position="808"/>
    </location>
</feature>
<feature type="region of interest" description="Interaction with PLN" evidence="1">
    <location>
        <begin position="932"/>
        <end position="943"/>
    </location>
</feature>
<feature type="active site" description="4-aspartylphosphate intermediate" evidence="1">
    <location>
        <position position="351"/>
    </location>
</feature>
<feature type="binding site" evidence="1">
    <location>
        <position position="304"/>
    </location>
    <ligand>
        <name>Ca(2+)</name>
        <dbReference type="ChEBI" id="CHEBI:29108"/>
        <label>1</label>
    </ligand>
</feature>
<feature type="binding site" evidence="1">
    <location>
        <position position="305"/>
    </location>
    <ligand>
        <name>Ca(2+)</name>
        <dbReference type="ChEBI" id="CHEBI:29108"/>
        <label>1</label>
    </ligand>
</feature>
<feature type="binding site" evidence="1">
    <location>
        <position position="307"/>
    </location>
    <ligand>
        <name>Ca(2+)</name>
        <dbReference type="ChEBI" id="CHEBI:29108"/>
        <label>1</label>
    </ligand>
</feature>
<feature type="binding site" evidence="1">
    <location>
        <position position="309"/>
    </location>
    <ligand>
        <name>Ca(2+)</name>
        <dbReference type="ChEBI" id="CHEBI:29108"/>
        <label>1</label>
    </ligand>
</feature>
<feature type="binding site" evidence="1">
    <location>
        <position position="351"/>
    </location>
    <ligand>
        <name>Mg(2+)</name>
        <dbReference type="ChEBI" id="CHEBI:18420"/>
    </ligand>
</feature>
<feature type="binding site" evidence="1">
    <location>
        <position position="353"/>
    </location>
    <ligand>
        <name>ATP</name>
        <dbReference type="ChEBI" id="CHEBI:30616"/>
    </ligand>
</feature>
<feature type="binding site" evidence="1">
    <location>
        <position position="353"/>
    </location>
    <ligand>
        <name>Mg(2+)</name>
        <dbReference type="ChEBI" id="CHEBI:18420"/>
    </ligand>
</feature>
<feature type="binding site" evidence="1">
    <location>
        <position position="442"/>
    </location>
    <ligand>
        <name>ATP</name>
        <dbReference type="ChEBI" id="CHEBI:30616"/>
    </ligand>
</feature>
<feature type="binding site" evidence="1">
    <location>
        <position position="489"/>
    </location>
    <ligand>
        <name>ATP</name>
        <dbReference type="ChEBI" id="CHEBI:30616"/>
    </ligand>
</feature>
<feature type="binding site" evidence="1">
    <location>
        <position position="515"/>
    </location>
    <ligand>
        <name>ATP</name>
        <dbReference type="ChEBI" id="CHEBI:30616"/>
    </ligand>
</feature>
<feature type="binding site" evidence="1">
    <location>
        <position position="560"/>
    </location>
    <ligand>
        <name>ATP</name>
        <dbReference type="ChEBI" id="CHEBI:30616"/>
    </ligand>
</feature>
<feature type="binding site" evidence="1">
    <location>
        <position position="625"/>
    </location>
    <ligand>
        <name>ATP</name>
        <dbReference type="ChEBI" id="CHEBI:30616"/>
    </ligand>
</feature>
<feature type="binding site" evidence="1">
    <location>
        <position position="626"/>
    </location>
    <ligand>
        <name>ATP</name>
        <dbReference type="ChEBI" id="CHEBI:30616"/>
    </ligand>
</feature>
<feature type="binding site" evidence="1">
    <location>
        <position position="627"/>
    </location>
    <ligand>
        <name>ATP</name>
        <dbReference type="ChEBI" id="CHEBI:30616"/>
    </ligand>
</feature>
<feature type="binding site" evidence="1">
    <location>
        <position position="678"/>
    </location>
    <ligand>
        <name>ATP</name>
        <dbReference type="ChEBI" id="CHEBI:30616"/>
    </ligand>
</feature>
<feature type="binding site" evidence="1">
    <location>
        <position position="684"/>
    </location>
    <ligand>
        <name>ATP</name>
        <dbReference type="ChEBI" id="CHEBI:30616"/>
    </ligand>
</feature>
<feature type="binding site" evidence="1">
    <location>
        <position position="703"/>
    </location>
    <ligand>
        <name>Mg(2+)</name>
        <dbReference type="ChEBI" id="CHEBI:18420"/>
    </ligand>
</feature>
<feature type="binding site" evidence="1">
    <location>
        <position position="706"/>
    </location>
    <ligand>
        <name>ATP</name>
        <dbReference type="ChEBI" id="CHEBI:30616"/>
    </ligand>
</feature>
<feature type="binding site" evidence="1">
    <location>
        <position position="768"/>
    </location>
    <ligand>
        <name>Ca(2+)</name>
        <dbReference type="ChEBI" id="CHEBI:29108"/>
        <label>2</label>
    </ligand>
</feature>
<feature type="binding site" evidence="1">
    <location>
        <position position="771"/>
    </location>
    <ligand>
        <name>Ca(2+)</name>
        <dbReference type="ChEBI" id="CHEBI:29108"/>
        <label>2</label>
    </ligand>
</feature>
<feature type="binding site" evidence="1">
    <location>
        <position position="796"/>
    </location>
    <ligand>
        <name>Ca(2+)</name>
        <dbReference type="ChEBI" id="CHEBI:29108"/>
        <label>1</label>
    </ligand>
</feature>
<feature type="binding site" evidence="1">
    <location>
        <position position="799"/>
    </location>
    <ligand>
        <name>Ca(2+)</name>
        <dbReference type="ChEBI" id="CHEBI:29108"/>
        <label>2</label>
    </ligand>
</feature>
<feature type="binding site" evidence="1">
    <location>
        <position position="800"/>
    </location>
    <ligand>
        <name>Ca(2+)</name>
        <dbReference type="ChEBI" id="CHEBI:29108"/>
        <label>1</label>
    </ligand>
</feature>
<feature type="binding site" evidence="1">
    <location>
        <position position="800"/>
    </location>
    <ligand>
        <name>Ca(2+)</name>
        <dbReference type="ChEBI" id="CHEBI:29108"/>
        <label>2</label>
    </ligand>
</feature>
<feature type="binding site" evidence="1">
    <location>
        <position position="908"/>
    </location>
    <ligand>
        <name>Ca(2+)</name>
        <dbReference type="ChEBI" id="CHEBI:29108"/>
        <label>2</label>
    </ligand>
</feature>
<feature type="modified residue" description="Phosphothreonine" evidence="2">
    <location>
        <position position="441"/>
    </location>
</feature>
<feature type="modified residue" description="Phosphothreonine" evidence="2">
    <location>
        <position position="569"/>
    </location>
</feature>
<feature type="modified residue" description="Phosphoserine" evidence="2">
    <location>
        <position position="581"/>
    </location>
</feature>
<feature type="disulfide bond" evidence="1">
    <location>
        <begin position="876"/>
        <end position="888"/>
    </location>
</feature>
<feature type="splice variant" id="VSP_054770" description="In isoform 3." evidence="7">
    <location>
        <begin position="1"/>
        <end position="125"/>
    </location>
</feature>
<feature type="splice variant" id="VSP_000355" description="In isoform SERCA1A and isoform 3." evidence="7 8">
    <original>DPEDERRK</original>
    <variation>G</variation>
    <location>
        <begin position="994"/>
        <end position="1001"/>
    </location>
</feature>
<feature type="sequence variant" id="VAR_015588" description="In BROD; dbSNP:rs121918115." evidence="4">
    <original>P</original>
    <variation>L</variation>
    <location>
        <position position="789"/>
    </location>
</feature>
<gene>
    <name evidence="10" type="primary">ATP2A1</name>
</gene>
<evidence type="ECO:0000250" key="1">
    <source>
        <dbReference type="UniProtKB" id="P04191"/>
    </source>
</evidence>
<evidence type="ECO:0000250" key="2">
    <source>
        <dbReference type="UniProtKB" id="Q64578"/>
    </source>
</evidence>
<evidence type="ECO:0000250" key="3">
    <source>
        <dbReference type="UniProtKB" id="Q8R429"/>
    </source>
</evidence>
<evidence type="ECO:0000269" key="4">
    <source>
    </source>
</evidence>
<evidence type="ECO:0000269" key="5">
    <source>
    </source>
</evidence>
<evidence type="ECO:0000269" key="6">
    <source>
    </source>
</evidence>
<evidence type="ECO:0000303" key="7">
    <source>
    </source>
</evidence>
<evidence type="ECO:0000303" key="8">
    <source>
    </source>
</evidence>
<evidence type="ECO:0000305" key="9"/>
<evidence type="ECO:0000312" key="10">
    <source>
        <dbReference type="HGNC" id="HGNC:811"/>
    </source>
</evidence>
<reference key="1">
    <citation type="journal article" date="1995" name="Genomics">
        <title>Characterization of cDNA and genomic DNA encoding SERCA1, the Ca(2+)-ATPase of human fast-twitch skeletal muscle sarcoplasmic reticulum, and its elimination as a candidate gene for Brody disease.</title>
        <authorList>
            <person name="Zhang Y."/>
            <person name="Fujii J."/>
            <person name="Phillips M.S."/>
            <person name="Chen H.-S."/>
            <person name="Karpati G."/>
            <person name="Yee W.-C."/>
            <person name="Schrank B."/>
            <person name="Cornblath D.R."/>
            <person name="Boylan K.B."/>
            <person name="Maclennan D.H."/>
        </authorList>
    </citation>
    <scope>NUCLEOTIDE SEQUENCE [GENOMIC DNA / MRNA] (ISOFORMS SERCA1A AND SERCA1B)</scope>
    <scope>TISSUE SPECIFICITY</scope>
    <scope>DEVELOPMENTAL STAGE</scope>
    <scope>INDUCTION</scope>
    <source>
        <tissue>Skeletal muscle</tissue>
    </source>
</reference>
<reference key="2">
    <citation type="journal article" date="2004" name="Nat. Genet.">
        <title>Complete sequencing and characterization of 21,243 full-length human cDNAs.</title>
        <authorList>
            <person name="Ota T."/>
            <person name="Suzuki Y."/>
            <person name="Nishikawa T."/>
            <person name="Otsuki T."/>
            <person name="Sugiyama T."/>
            <person name="Irie R."/>
            <person name="Wakamatsu A."/>
            <person name="Hayashi K."/>
            <person name="Sato H."/>
            <person name="Nagai K."/>
            <person name="Kimura K."/>
            <person name="Makita H."/>
            <person name="Sekine M."/>
            <person name="Obayashi M."/>
            <person name="Nishi T."/>
            <person name="Shibahara T."/>
            <person name="Tanaka T."/>
            <person name="Ishii S."/>
            <person name="Yamamoto J."/>
            <person name="Saito K."/>
            <person name="Kawai Y."/>
            <person name="Isono Y."/>
            <person name="Nakamura Y."/>
            <person name="Nagahari K."/>
            <person name="Murakami K."/>
            <person name="Yasuda T."/>
            <person name="Iwayanagi T."/>
            <person name="Wagatsuma M."/>
            <person name="Shiratori A."/>
            <person name="Sudo H."/>
            <person name="Hosoiri T."/>
            <person name="Kaku Y."/>
            <person name="Kodaira H."/>
            <person name="Kondo H."/>
            <person name="Sugawara M."/>
            <person name="Takahashi M."/>
            <person name="Kanda K."/>
            <person name="Yokoi T."/>
            <person name="Furuya T."/>
            <person name="Kikkawa E."/>
            <person name="Omura Y."/>
            <person name="Abe K."/>
            <person name="Kamihara K."/>
            <person name="Katsuta N."/>
            <person name="Sato K."/>
            <person name="Tanikawa M."/>
            <person name="Yamazaki M."/>
            <person name="Ninomiya K."/>
            <person name="Ishibashi T."/>
            <person name="Yamashita H."/>
            <person name="Murakawa K."/>
            <person name="Fujimori K."/>
            <person name="Tanai H."/>
            <person name="Kimata M."/>
            <person name="Watanabe M."/>
            <person name="Hiraoka S."/>
            <person name="Chiba Y."/>
            <person name="Ishida S."/>
            <person name="Ono Y."/>
            <person name="Takiguchi S."/>
            <person name="Watanabe S."/>
            <person name="Yosida M."/>
            <person name="Hotuta T."/>
            <person name="Kusano J."/>
            <person name="Kanehori K."/>
            <person name="Takahashi-Fujii A."/>
            <person name="Hara H."/>
            <person name="Tanase T.-O."/>
            <person name="Nomura Y."/>
            <person name="Togiya S."/>
            <person name="Komai F."/>
            <person name="Hara R."/>
            <person name="Takeuchi K."/>
            <person name="Arita M."/>
            <person name="Imose N."/>
            <person name="Musashino K."/>
            <person name="Yuuki H."/>
            <person name="Oshima A."/>
            <person name="Sasaki N."/>
            <person name="Aotsuka S."/>
            <person name="Yoshikawa Y."/>
            <person name="Matsunawa H."/>
            <person name="Ichihara T."/>
            <person name="Shiohata N."/>
            <person name="Sano S."/>
            <person name="Moriya S."/>
            <person name="Momiyama H."/>
            <person name="Satoh N."/>
            <person name="Takami S."/>
            <person name="Terashima Y."/>
            <person name="Suzuki O."/>
            <person name="Nakagawa S."/>
            <person name="Senoh A."/>
            <person name="Mizoguchi H."/>
            <person name="Goto Y."/>
            <person name="Shimizu F."/>
            <person name="Wakebe H."/>
            <person name="Hishigaki H."/>
            <person name="Watanabe T."/>
            <person name="Sugiyama A."/>
            <person name="Takemoto M."/>
            <person name="Kawakami B."/>
            <person name="Yamazaki M."/>
            <person name="Watanabe K."/>
            <person name="Kumagai A."/>
            <person name="Itakura S."/>
            <person name="Fukuzumi Y."/>
            <person name="Fujimori Y."/>
            <person name="Komiyama M."/>
            <person name="Tashiro H."/>
            <person name="Tanigami A."/>
            <person name="Fujiwara T."/>
            <person name="Ono T."/>
            <person name="Yamada K."/>
            <person name="Fujii Y."/>
            <person name="Ozaki K."/>
            <person name="Hirao M."/>
            <person name="Ohmori Y."/>
            <person name="Kawabata A."/>
            <person name="Hikiji T."/>
            <person name="Kobatake N."/>
            <person name="Inagaki H."/>
            <person name="Ikema Y."/>
            <person name="Okamoto S."/>
            <person name="Okitani R."/>
            <person name="Kawakami T."/>
            <person name="Noguchi S."/>
            <person name="Itoh T."/>
            <person name="Shigeta K."/>
            <person name="Senba T."/>
            <person name="Matsumura K."/>
            <person name="Nakajima Y."/>
            <person name="Mizuno T."/>
            <person name="Morinaga M."/>
            <person name="Sasaki M."/>
            <person name="Togashi T."/>
            <person name="Oyama M."/>
            <person name="Hata H."/>
            <person name="Watanabe M."/>
            <person name="Komatsu T."/>
            <person name="Mizushima-Sugano J."/>
            <person name="Satoh T."/>
            <person name="Shirai Y."/>
            <person name="Takahashi Y."/>
            <person name="Nakagawa K."/>
            <person name="Okumura K."/>
            <person name="Nagase T."/>
            <person name="Nomura N."/>
            <person name="Kikuchi H."/>
            <person name="Masuho Y."/>
            <person name="Yamashita R."/>
            <person name="Nakai K."/>
            <person name="Yada T."/>
            <person name="Nakamura Y."/>
            <person name="Ohara O."/>
            <person name="Isogai T."/>
            <person name="Sugano S."/>
        </authorList>
    </citation>
    <scope>NUCLEOTIDE SEQUENCE [LARGE SCALE MRNA] (ISOFORMS SERCA1A AND 3)</scope>
    <source>
        <tissue>Tongue</tissue>
    </source>
</reference>
<reference key="3">
    <citation type="journal article" date="2004" name="Nature">
        <title>The sequence and analysis of duplication-rich human chromosome 16.</title>
        <authorList>
            <person name="Martin J."/>
            <person name="Han C."/>
            <person name="Gordon L.A."/>
            <person name="Terry A."/>
            <person name="Prabhakar S."/>
            <person name="She X."/>
            <person name="Xie G."/>
            <person name="Hellsten U."/>
            <person name="Chan Y.M."/>
            <person name="Altherr M."/>
            <person name="Couronne O."/>
            <person name="Aerts A."/>
            <person name="Bajorek E."/>
            <person name="Black S."/>
            <person name="Blumer H."/>
            <person name="Branscomb E."/>
            <person name="Brown N.C."/>
            <person name="Bruno W.J."/>
            <person name="Buckingham J.M."/>
            <person name="Callen D.F."/>
            <person name="Campbell C.S."/>
            <person name="Campbell M.L."/>
            <person name="Campbell E.W."/>
            <person name="Caoile C."/>
            <person name="Challacombe J.F."/>
            <person name="Chasteen L.A."/>
            <person name="Chertkov O."/>
            <person name="Chi H.C."/>
            <person name="Christensen M."/>
            <person name="Clark L.M."/>
            <person name="Cohn J.D."/>
            <person name="Denys M."/>
            <person name="Detter J.C."/>
            <person name="Dickson M."/>
            <person name="Dimitrijevic-Bussod M."/>
            <person name="Escobar J."/>
            <person name="Fawcett J.J."/>
            <person name="Flowers D."/>
            <person name="Fotopulos D."/>
            <person name="Glavina T."/>
            <person name="Gomez M."/>
            <person name="Gonzales E."/>
            <person name="Goodstein D."/>
            <person name="Goodwin L.A."/>
            <person name="Grady D.L."/>
            <person name="Grigoriev I."/>
            <person name="Groza M."/>
            <person name="Hammon N."/>
            <person name="Hawkins T."/>
            <person name="Haydu L."/>
            <person name="Hildebrand C.E."/>
            <person name="Huang W."/>
            <person name="Israni S."/>
            <person name="Jett J."/>
            <person name="Jewett P.B."/>
            <person name="Kadner K."/>
            <person name="Kimball H."/>
            <person name="Kobayashi A."/>
            <person name="Krawczyk M.-C."/>
            <person name="Leyba T."/>
            <person name="Longmire J.L."/>
            <person name="Lopez F."/>
            <person name="Lou Y."/>
            <person name="Lowry S."/>
            <person name="Ludeman T."/>
            <person name="Manohar C.F."/>
            <person name="Mark G.A."/>
            <person name="McMurray K.L."/>
            <person name="Meincke L.J."/>
            <person name="Morgan J."/>
            <person name="Moyzis R.K."/>
            <person name="Mundt M.O."/>
            <person name="Munk A.C."/>
            <person name="Nandkeshwar R.D."/>
            <person name="Pitluck S."/>
            <person name="Pollard M."/>
            <person name="Predki P."/>
            <person name="Parson-Quintana B."/>
            <person name="Ramirez L."/>
            <person name="Rash S."/>
            <person name="Retterer J."/>
            <person name="Ricke D.O."/>
            <person name="Robinson D.L."/>
            <person name="Rodriguez A."/>
            <person name="Salamov A."/>
            <person name="Saunders E.H."/>
            <person name="Scott D."/>
            <person name="Shough T."/>
            <person name="Stallings R.L."/>
            <person name="Stalvey M."/>
            <person name="Sutherland R.D."/>
            <person name="Tapia R."/>
            <person name="Tesmer J.G."/>
            <person name="Thayer N."/>
            <person name="Thompson L.S."/>
            <person name="Tice H."/>
            <person name="Torney D.C."/>
            <person name="Tran-Gyamfi M."/>
            <person name="Tsai M."/>
            <person name="Ulanovsky L.E."/>
            <person name="Ustaszewska A."/>
            <person name="Vo N."/>
            <person name="White P.S."/>
            <person name="Williams A.L."/>
            <person name="Wills P.L."/>
            <person name="Wu J.-R."/>
            <person name="Wu K."/>
            <person name="Yang J."/>
            <person name="DeJong P."/>
            <person name="Bruce D."/>
            <person name="Doggett N.A."/>
            <person name="Deaven L."/>
            <person name="Schmutz J."/>
            <person name="Grimwood J."/>
            <person name="Richardson P."/>
            <person name="Rokhsar D.S."/>
            <person name="Eichler E.E."/>
            <person name="Gilna P."/>
            <person name="Lucas S.M."/>
            <person name="Myers R.M."/>
            <person name="Rubin E.M."/>
            <person name="Pennacchio L.A."/>
        </authorList>
    </citation>
    <scope>NUCLEOTIDE SEQUENCE [LARGE SCALE GENOMIC DNA]</scope>
    <source>
        <tissue>Thymus</tissue>
    </source>
</reference>
<reference key="4">
    <citation type="journal article" date="2017" name="Mol. Cell">
        <title>The ER-Localized Transmembrane Protein EPG-3/VMP1 Regulates SERCA Activity to Control ER-Isolation Membrane Contacts for Autophagosome Formation.</title>
        <authorList>
            <person name="Zhao Y.G."/>
            <person name="Chen Y."/>
            <person name="Miao G."/>
            <person name="Zhao H."/>
            <person name="Qu W."/>
            <person name="Li D."/>
            <person name="Wang Z."/>
            <person name="Liu N."/>
            <person name="Li L."/>
            <person name="Chen S."/>
            <person name="Liu P."/>
            <person name="Feng D."/>
            <person name="Zhang H."/>
        </authorList>
    </citation>
    <scope>INTERACTION WITH VMP1</scope>
</reference>
<reference key="5">
    <citation type="journal article" date="2000" name="Hum. Genet.">
        <title>The mutation of Pro(789) to Leu reduces the activity of the fast-twitch skeletal muscle sarco(endo)plasmic reticulum Ca(2+) ATPase (SERCA1) and is associated with Brody disease.</title>
        <authorList>
            <person name="Odermatt A."/>
            <person name="Barton K."/>
            <person name="Khanna V.K."/>
            <person name="Mathieu J."/>
            <person name="Escolar D."/>
            <person name="Kuntzer T."/>
            <person name="Karpati G."/>
            <person name="MacLennan D.H."/>
        </authorList>
    </citation>
    <scope>VARIANT BROD LEU-789</scope>
    <scope>FUNCTION</scope>
</reference>
<accession>O14983</accession>
<accession>A8K5J9</accession>
<accession>B3KY17</accession>
<accession>O14984</accession>
<protein>
    <recommendedName>
        <fullName evidence="9">Sarcoplasmic/endoplasmic reticulum calcium ATPase 1</fullName>
        <shortName evidence="9">SERCA1</shortName>
        <shortName>SR Ca(2+)-ATPase 1</shortName>
        <ecNumber evidence="1">7.2.2.10</ecNumber>
    </recommendedName>
    <alternativeName>
        <fullName>Calcium pump 1</fullName>
    </alternativeName>
    <alternativeName>
        <fullName>Calcium-transporting ATPase sarcoplasmic reticulum type, fast twitch skeletal muscle isoform</fullName>
    </alternativeName>
    <alternativeName>
        <fullName>Endoplasmic reticulum class 1/2 Ca(2+) ATPase</fullName>
    </alternativeName>
</protein>